<keyword id="KW-0687">Ribonucleoprotein</keyword>
<keyword id="KW-0689">Ribosomal protein</keyword>
<feature type="chain" id="PRO_1000194085" description="Large ribosomal subunit protein bL35">
    <location>
        <begin position="1"/>
        <end position="64"/>
    </location>
</feature>
<feature type="region of interest" description="Disordered" evidence="2">
    <location>
        <begin position="1"/>
        <end position="21"/>
    </location>
</feature>
<feature type="compositionally biased region" description="Basic residues" evidence="2">
    <location>
        <begin position="10"/>
        <end position="21"/>
    </location>
</feature>
<protein>
    <recommendedName>
        <fullName evidence="1">Large ribosomal subunit protein bL35</fullName>
    </recommendedName>
    <alternativeName>
        <fullName evidence="3">50S ribosomal protein L35</fullName>
    </alternativeName>
</protein>
<dbReference type="EMBL" id="CP001279">
    <property type="protein sequence ID" value="ACM92551.1"/>
    <property type="molecule type" value="Genomic_DNA"/>
</dbReference>
<dbReference type="RefSeq" id="WP_012663922.1">
    <property type="nucleotide sequence ID" value="NC_012115.1"/>
</dbReference>
<dbReference type="SMR" id="B9L885"/>
<dbReference type="STRING" id="598659.NAMH_0421"/>
<dbReference type="KEGG" id="nam:NAMH_0421"/>
<dbReference type="eggNOG" id="COG0291">
    <property type="taxonomic scope" value="Bacteria"/>
</dbReference>
<dbReference type="HOGENOM" id="CLU_169643_4_3_7"/>
<dbReference type="OrthoDB" id="9804851at2"/>
<dbReference type="Proteomes" id="UP000000448">
    <property type="component" value="Chromosome"/>
</dbReference>
<dbReference type="GO" id="GO:0022625">
    <property type="term" value="C:cytosolic large ribosomal subunit"/>
    <property type="evidence" value="ECO:0007669"/>
    <property type="project" value="TreeGrafter"/>
</dbReference>
<dbReference type="GO" id="GO:0003735">
    <property type="term" value="F:structural constituent of ribosome"/>
    <property type="evidence" value="ECO:0007669"/>
    <property type="project" value="InterPro"/>
</dbReference>
<dbReference type="GO" id="GO:0006412">
    <property type="term" value="P:translation"/>
    <property type="evidence" value="ECO:0007669"/>
    <property type="project" value="UniProtKB-UniRule"/>
</dbReference>
<dbReference type="FunFam" id="4.10.410.60:FF:000001">
    <property type="entry name" value="50S ribosomal protein L35"/>
    <property type="match status" value="1"/>
</dbReference>
<dbReference type="Gene3D" id="4.10.410.60">
    <property type="match status" value="1"/>
</dbReference>
<dbReference type="HAMAP" id="MF_00514">
    <property type="entry name" value="Ribosomal_bL35"/>
    <property type="match status" value="1"/>
</dbReference>
<dbReference type="InterPro" id="IPR001706">
    <property type="entry name" value="Ribosomal_bL35"/>
</dbReference>
<dbReference type="InterPro" id="IPR021137">
    <property type="entry name" value="Ribosomal_bL35-like"/>
</dbReference>
<dbReference type="InterPro" id="IPR018265">
    <property type="entry name" value="Ribosomal_bL35_CS"/>
</dbReference>
<dbReference type="InterPro" id="IPR037229">
    <property type="entry name" value="Ribosomal_bL35_sf"/>
</dbReference>
<dbReference type="NCBIfam" id="TIGR00001">
    <property type="entry name" value="rpmI_bact"/>
    <property type="match status" value="1"/>
</dbReference>
<dbReference type="PANTHER" id="PTHR33343">
    <property type="entry name" value="54S RIBOSOMAL PROTEIN BL35M"/>
    <property type="match status" value="1"/>
</dbReference>
<dbReference type="PANTHER" id="PTHR33343:SF1">
    <property type="entry name" value="LARGE RIBOSOMAL SUBUNIT PROTEIN BL35M"/>
    <property type="match status" value="1"/>
</dbReference>
<dbReference type="Pfam" id="PF01632">
    <property type="entry name" value="Ribosomal_L35p"/>
    <property type="match status" value="1"/>
</dbReference>
<dbReference type="PRINTS" id="PR00064">
    <property type="entry name" value="RIBOSOMALL35"/>
</dbReference>
<dbReference type="SUPFAM" id="SSF143034">
    <property type="entry name" value="L35p-like"/>
    <property type="match status" value="1"/>
</dbReference>
<dbReference type="PROSITE" id="PS00936">
    <property type="entry name" value="RIBOSOMAL_L35"/>
    <property type="match status" value="1"/>
</dbReference>
<proteinExistence type="inferred from homology"/>
<comment type="similarity">
    <text evidence="1">Belongs to the bacterial ribosomal protein bL35 family.</text>
</comment>
<evidence type="ECO:0000255" key="1">
    <source>
        <dbReference type="HAMAP-Rule" id="MF_00514"/>
    </source>
</evidence>
<evidence type="ECO:0000256" key="2">
    <source>
        <dbReference type="SAM" id="MobiDB-lite"/>
    </source>
</evidence>
<evidence type="ECO:0000305" key="3"/>
<reference key="1">
    <citation type="journal article" date="2009" name="PLoS Genet.">
        <title>Adaptations to submarine hydrothermal environments exemplified by the genome of Nautilia profundicola.</title>
        <authorList>
            <person name="Campbell B.J."/>
            <person name="Smith J.L."/>
            <person name="Hanson T.E."/>
            <person name="Klotz M.G."/>
            <person name="Stein L.Y."/>
            <person name="Lee C.K."/>
            <person name="Wu D."/>
            <person name="Robinson J.M."/>
            <person name="Khouri H.M."/>
            <person name="Eisen J.A."/>
            <person name="Cary S.C."/>
        </authorList>
    </citation>
    <scope>NUCLEOTIDE SEQUENCE [LARGE SCALE GENOMIC DNA]</scope>
    <source>
        <strain>ATCC BAA-1463 / DSM 18972 / AmH</strain>
    </source>
</reference>
<name>RL35_NAUPA</name>
<sequence length="64" mass="7367">MPKMKTNRGAAKRFKVKKSGKIKRGAAYRSHILTKKSQKRKRNLRAPKYVDSTNIKAVRELLAI</sequence>
<organism>
    <name type="scientific">Nautilia profundicola (strain ATCC BAA-1463 / DSM 18972 / AmH)</name>
    <dbReference type="NCBI Taxonomy" id="598659"/>
    <lineage>
        <taxon>Bacteria</taxon>
        <taxon>Pseudomonadati</taxon>
        <taxon>Campylobacterota</taxon>
        <taxon>Epsilonproteobacteria</taxon>
        <taxon>Nautiliales</taxon>
        <taxon>Nautiliaceae</taxon>
        <taxon>Nautilia</taxon>
    </lineage>
</organism>
<gene>
    <name evidence="1" type="primary">rpmI</name>
    <name type="ordered locus">NAMH_0421</name>
</gene>
<accession>B9L885</accession>